<gene>
    <name evidence="1" type="primary">lon</name>
    <name type="ordered locus">Noc_1387</name>
</gene>
<proteinExistence type="inferred from homology"/>
<reference key="1">
    <citation type="journal article" date="2006" name="Appl. Environ. Microbiol.">
        <title>Complete genome sequence of the marine, chemolithoautotrophic, ammonia-oxidizing bacterium Nitrosococcus oceani ATCC 19707.</title>
        <authorList>
            <person name="Klotz M.G."/>
            <person name="Arp D.J."/>
            <person name="Chain P.S.G."/>
            <person name="El-Sheikh A.F."/>
            <person name="Hauser L.J."/>
            <person name="Hommes N.G."/>
            <person name="Larimer F.W."/>
            <person name="Malfatti S.A."/>
            <person name="Norton J.M."/>
            <person name="Poret-Peterson A.T."/>
            <person name="Vergez L.M."/>
            <person name="Ward B.B."/>
        </authorList>
    </citation>
    <scope>NUCLEOTIDE SEQUENCE [LARGE SCALE GENOMIC DNA]</scope>
    <source>
        <strain>ATCC 19707 / BCRC 17464 / JCM 30415 / NCIMB 11848 / C-107</strain>
    </source>
</reference>
<protein>
    <recommendedName>
        <fullName evidence="1">Lon protease</fullName>
        <ecNumber evidence="1">3.4.21.53</ecNumber>
    </recommendedName>
    <alternativeName>
        <fullName evidence="1">ATP-dependent protease La</fullName>
    </alternativeName>
</protein>
<feature type="chain" id="PRO_0000396587" description="Lon protease">
    <location>
        <begin position="1"/>
        <end position="772"/>
    </location>
</feature>
<feature type="domain" description="Lon N-terminal" evidence="3">
    <location>
        <begin position="6"/>
        <end position="200"/>
    </location>
</feature>
<feature type="domain" description="Lon proteolytic" evidence="2">
    <location>
        <begin position="588"/>
        <end position="769"/>
    </location>
</feature>
<feature type="active site" evidence="1">
    <location>
        <position position="675"/>
    </location>
</feature>
<feature type="active site" evidence="1">
    <location>
        <position position="718"/>
    </location>
</feature>
<feature type="binding site" evidence="1">
    <location>
        <begin position="352"/>
        <end position="359"/>
    </location>
    <ligand>
        <name>ATP</name>
        <dbReference type="ChEBI" id="CHEBI:30616"/>
    </ligand>
</feature>
<evidence type="ECO:0000255" key="1">
    <source>
        <dbReference type="HAMAP-Rule" id="MF_01973"/>
    </source>
</evidence>
<evidence type="ECO:0000255" key="2">
    <source>
        <dbReference type="PROSITE-ProRule" id="PRU01122"/>
    </source>
</evidence>
<evidence type="ECO:0000255" key="3">
    <source>
        <dbReference type="PROSITE-ProRule" id="PRU01123"/>
    </source>
</evidence>
<dbReference type="EC" id="3.4.21.53" evidence="1"/>
<dbReference type="EMBL" id="CP000127">
    <property type="protein sequence ID" value="ABA57880.1"/>
    <property type="molecule type" value="Genomic_DNA"/>
</dbReference>
<dbReference type="RefSeq" id="WP_002811035.1">
    <property type="nucleotide sequence ID" value="NC_007484.1"/>
</dbReference>
<dbReference type="SMR" id="Q3JBB6"/>
<dbReference type="STRING" id="323261.Noc_1387"/>
<dbReference type="KEGG" id="noc:Noc_1387"/>
<dbReference type="eggNOG" id="COG0466">
    <property type="taxonomic scope" value="Bacteria"/>
</dbReference>
<dbReference type="HOGENOM" id="CLU_004109_4_3_6"/>
<dbReference type="InParanoid" id="Q3JBB6"/>
<dbReference type="Proteomes" id="UP000006838">
    <property type="component" value="Chromosome"/>
</dbReference>
<dbReference type="GO" id="GO:0005737">
    <property type="term" value="C:cytoplasm"/>
    <property type="evidence" value="ECO:0007669"/>
    <property type="project" value="UniProtKB-SubCell"/>
</dbReference>
<dbReference type="GO" id="GO:0005524">
    <property type="term" value="F:ATP binding"/>
    <property type="evidence" value="ECO:0007669"/>
    <property type="project" value="UniProtKB-UniRule"/>
</dbReference>
<dbReference type="GO" id="GO:0016887">
    <property type="term" value="F:ATP hydrolysis activity"/>
    <property type="evidence" value="ECO:0007669"/>
    <property type="project" value="UniProtKB-UniRule"/>
</dbReference>
<dbReference type="GO" id="GO:0004176">
    <property type="term" value="F:ATP-dependent peptidase activity"/>
    <property type="evidence" value="ECO:0007669"/>
    <property type="project" value="UniProtKB-UniRule"/>
</dbReference>
<dbReference type="GO" id="GO:0043565">
    <property type="term" value="F:sequence-specific DNA binding"/>
    <property type="evidence" value="ECO:0007669"/>
    <property type="project" value="UniProtKB-UniRule"/>
</dbReference>
<dbReference type="GO" id="GO:0004252">
    <property type="term" value="F:serine-type endopeptidase activity"/>
    <property type="evidence" value="ECO:0007669"/>
    <property type="project" value="UniProtKB-UniRule"/>
</dbReference>
<dbReference type="GO" id="GO:0034605">
    <property type="term" value="P:cellular response to heat"/>
    <property type="evidence" value="ECO:0007669"/>
    <property type="project" value="UniProtKB-UniRule"/>
</dbReference>
<dbReference type="GO" id="GO:0006515">
    <property type="term" value="P:protein quality control for misfolded or incompletely synthesized proteins"/>
    <property type="evidence" value="ECO:0007669"/>
    <property type="project" value="UniProtKB-UniRule"/>
</dbReference>
<dbReference type="CDD" id="cd19500">
    <property type="entry name" value="RecA-like_Lon"/>
    <property type="match status" value="1"/>
</dbReference>
<dbReference type="FunFam" id="3.40.50.300:FF:000021">
    <property type="entry name" value="Lon protease homolog"/>
    <property type="match status" value="1"/>
</dbReference>
<dbReference type="Gene3D" id="1.10.8.60">
    <property type="match status" value="1"/>
</dbReference>
<dbReference type="Gene3D" id="1.20.5.5270">
    <property type="match status" value="1"/>
</dbReference>
<dbReference type="Gene3D" id="1.20.58.1480">
    <property type="match status" value="1"/>
</dbReference>
<dbReference type="Gene3D" id="3.30.230.10">
    <property type="match status" value="1"/>
</dbReference>
<dbReference type="Gene3D" id="2.30.130.40">
    <property type="entry name" value="LON domain-like"/>
    <property type="match status" value="1"/>
</dbReference>
<dbReference type="Gene3D" id="3.40.50.300">
    <property type="entry name" value="P-loop containing nucleotide triphosphate hydrolases"/>
    <property type="match status" value="1"/>
</dbReference>
<dbReference type="HAMAP" id="MF_01973">
    <property type="entry name" value="lon_bact"/>
    <property type="match status" value="1"/>
</dbReference>
<dbReference type="InterPro" id="IPR003593">
    <property type="entry name" value="AAA+_ATPase"/>
</dbReference>
<dbReference type="InterPro" id="IPR003959">
    <property type="entry name" value="ATPase_AAA_core"/>
</dbReference>
<dbReference type="InterPro" id="IPR027543">
    <property type="entry name" value="Lon_bac"/>
</dbReference>
<dbReference type="InterPro" id="IPR004815">
    <property type="entry name" value="Lon_bac/euk-typ"/>
</dbReference>
<dbReference type="InterPro" id="IPR054594">
    <property type="entry name" value="Lon_lid"/>
</dbReference>
<dbReference type="InterPro" id="IPR008269">
    <property type="entry name" value="Lon_proteolytic"/>
</dbReference>
<dbReference type="InterPro" id="IPR027065">
    <property type="entry name" value="Lon_Prtase"/>
</dbReference>
<dbReference type="InterPro" id="IPR003111">
    <property type="entry name" value="Lon_prtase_N"/>
</dbReference>
<dbReference type="InterPro" id="IPR046336">
    <property type="entry name" value="Lon_prtase_N_sf"/>
</dbReference>
<dbReference type="InterPro" id="IPR027417">
    <property type="entry name" value="P-loop_NTPase"/>
</dbReference>
<dbReference type="InterPro" id="IPR008268">
    <property type="entry name" value="Peptidase_S16_AS"/>
</dbReference>
<dbReference type="InterPro" id="IPR015947">
    <property type="entry name" value="PUA-like_sf"/>
</dbReference>
<dbReference type="InterPro" id="IPR020568">
    <property type="entry name" value="Ribosomal_Su5_D2-typ_SF"/>
</dbReference>
<dbReference type="InterPro" id="IPR014721">
    <property type="entry name" value="Ribsml_uS5_D2-typ_fold_subgr"/>
</dbReference>
<dbReference type="NCBIfam" id="TIGR00763">
    <property type="entry name" value="lon"/>
    <property type="match status" value="1"/>
</dbReference>
<dbReference type="PANTHER" id="PTHR10046">
    <property type="entry name" value="ATP DEPENDENT LON PROTEASE FAMILY MEMBER"/>
    <property type="match status" value="1"/>
</dbReference>
<dbReference type="Pfam" id="PF00004">
    <property type="entry name" value="AAA"/>
    <property type="match status" value="1"/>
</dbReference>
<dbReference type="Pfam" id="PF05362">
    <property type="entry name" value="Lon_C"/>
    <property type="match status" value="1"/>
</dbReference>
<dbReference type="Pfam" id="PF22667">
    <property type="entry name" value="Lon_lid"/>
    <property type="match status" value="1"/>
</dbReference>
<dbReference type="Pfam" id="PF02190">
    <property type="entry name" value="LON_substr_bdg"/>
    <property type="match status" value="1"/>
</dbReference>
<dbReference type="PIRSF" id="PIRSF001174">
    <property type="entry name" value="Lon_proteas"/>
    <property type="match status" value="1"/>
</dbReference>
<dbReference type="PRINTS" id="PR00830">
    <property type="entry name" value="ENDOLAPTASE"/>
</dbReference>
<dbReference type="SMART" id="SM00382">
    <property type="entry name" value="AAA"/>
    <property type="match status" value="1"/>
</dbReference>
<dbReference type="SMART" id="SM00464">
    <property type="entry name" value="LON"/>
    <property type="match status" value="1"/>
</dbReference>
<dbReference type="SUPFAM" id="SSF52540">
    <property type="entry name" value="P-loop containing nucleoside triphosphate hydrolases"/>
    <property type="match status" value="1"/>
</dbReference>
<dbReference type="SUPFAM" id="SSF88697">
    <property type="entry name" value="PUA domain-like"/>
    <property type="match status" value="1"/>
</dbReference>
<dbReference type="SUPFAM" id="SSF54211">
    <property type="entry name" value="Ribosomal protein S5 domain 2-like"/>
    <property type="match status" value="1"/>
</dbReference>
<dbReference type="PROSITE" id="PS51787">
    <property type="entry name" value="LON_N"/>
    <property type="match status" value="1"/>
</dbReference>
<dbReference type="PROSITE" id="PS51786">
    <property type="entry name" value="LON_PROTEOLYTIC"/>
    <property type="match status" value="1"/>
</dbReference>
<dbReference type="PROSITE" id="PS01046">
    <property type="entry name" value="LON_SER"/>
    <property type="match status" value="1"/>
</dbReference>
<organism>
    <name type="scientific">Nitrosococcus oceani (strain ATCC 19707 / BCRC 17464 / JCM 30415 / NCIMB 11848 / C-107)</name>
    <dbReference type="NCBI Taxonomy" id="323261"/>
    <lineage>
        <taxon>Bacteria</taxon>
        <taxon>Pseudomonadati</taxon>
        <taxon>Pseudomonadota</taxon>
        <taxon>Gammaproteobacteria</taxon>
        <taxon>Chromatiales</taxon>
        <taxon>Chromatiaceae</taxon>
        <taxon>Nitrosococcus</taxon>
    </lineage>
</organism>
<keyword id="KW-0067">ATP-binding</keyword>
<keyword id="KW-0963">Cytoplasm</keyword>
<keyword id="KW-0378">Hydrolase</keyword>
<keyword id="KW-0547">Nucleotide-binding</keyword>
<keyword id="KW-0645">Protease</keyword>
<keyword id="KW-1185">Reference proteome</keyword>
<keyword id="KW-0720">Serine protease</keyword>
<keyword id="KW-0346">Stress response</keyword>
<accession>Q3JBB6</accession>
<name>LON_NITOC</name>
<sequence>MENNAYPTLPLKNTVLFPHLVLPLSVGRAGSIAAVEAALSSEDKLIAVFPQKDPRTDEPAADDLFRFGTVGIIKKMVRSEDTVQILVQGIERVEQLEMVQKQPYLSLKIATLSEPSDTGTEIEALHRTVIELAGKMIELVQPQIQVGIHHIISDVEKPLHQIYLLTSILSLDFDKEKELLAAATQVEALQLMHRYLNHEVQVLEVRQKITSTAQTEIDKKQREYVLRQQLEAIQEELGETNPEQAEIKELRQRMEETELPELVRKEVEKEITRLERMPSAAPDYQLTRGYVELALELPWNKTTEDRLDLKRAREILDEDHFDLEDVKERIIEHLAVMKLNPEAKSPILCFVGPPGVGKTSVGQSMARALGRKFERMSLGGLHDESELRGHRRTYIGAMPGRIIRAIRRTGYQNPLLMLDEIDKLGRDFRGDPAAALLEILDPAQNAEFHDNYLDLPFDLSKIFFVTTANTLDTIPRPLLDRMEILRLPGYSDEEKQHIARRYLIGRQIREAGLSEIQLSIPDETLSYLIRRYTREAGVRELERMLGRIARKVATQVATGQTQPVTVTPQDLVELLGPERFFAEEMRQQLAPGVAAGLAWTEAGGDVLYVEAALLPEGKGMTLTGQLGSIMQESAKAAQSYLWSRAEELNIDQKTIRESGVHIHVPAGAIPKDGPSAGVTMASALTSAYAHQPVRSDTAMTGEITLSGLVLPVGGIKEKVLAAHRSGIQRIILPKENEKDLREIPEHVRQSIQFILARRIEEVLAEAIPDLNR</sequence>
<comment type="function">
    <text evidence="1">ATP-dependent serine protease that mediates the selective degradation of mutant and abnormal proteins as well as certain short-lived regulatory proteins. Required for cellular homeostasis and for survival from DNA damage and developmental changes induced by stress. Degrades polypeptides processively to yield small peptide fragments that are 5 to 10 amino acids long. Binds to DNA in a double-stranded, site-specific manner.</text>
</comment>
<comment type="catalytic activity">
    <reaction evidence="1">
        <text>Hydrolysis of proteins in presence of ATP.</text>
        <dbReference type="EC" id="3.4.21.53"/>
    </reaction>
</comment>
<comment type="subunit">
    <text evidence="1">Homohexamer. Organized in a ring with a central cavity.</text>
</comment>
<comment type="subcellular location">
    <subcellularLocation>
        <location evidence="1">Cytoplasm</location>
    </subcellularLocation>
</comment>
<comment type="induction">
    <text evidence="1">By heat shock.</text>
</comment>
<comment type="similarity">
    <text evidence="1">Belongs to the peptidase S16 family.</text>
</comment>